<dbReference type="EMBL" id="AM040264">
    <property type="protein sequence ID" value="CAJ11988.1"/>
    <property type="status" value="ALT_INIT"/>
    <property type="molecule type" value="Genomic_DNA"/>
</dbReference>
<dbReference type="EMBL" id="AF279676">
    <property type="protein sequence ID" value="AAG01447.1"/>
    <property type="molecule type" value="Genomic_DNA"/>
</dbReference>
<dbReference type="SMR" id="Q2YR40"/>
<dbReference type="STRING" id="359391.BAB1_2032"/>
<dbReference type="KEGG" id="bmf:BAB1_2032"/>
<dbReference type="HOGENOM" id="CLU_027562_9_0_5"/>
<dbReference type="PRO" id="PR:Q2YR40"/>
<dbReference type="Proteomes" id="UP000002719">
    <property type="component" value="Chromosome I"/>
</dbReference>
<dbReference type="GO" id="GO:0005737">
    <property type="term" value="C:cytoplasm"/>
    <property type="evidence" value="ECO:0007669"/>
    <property type="project" value="UniProtKB-SubCell"/>
</dbReference>
<dbReference type="GO" id="GO:0003677">
    <property type="term" value="F:DNA binding"/>
    <property type="evidence" value="ECO:0007669"/>
    <property type="project" value="UniProtKB-KW"/>
</dbReference>
<dbReference type="GO" id="GO:0009037">
    <property type="term" value="F:tyrosine-based site-specific recombinase activity"/>
    <property type="evidence" value="ECO:0007669"/>
    <property type="project" value="UniProtKB-UniRule"/>
</dbReference>
<dbReference type="GO" id="GO:0051301">
    <property type="term" value="P:cell division"/>
    <property type="evidence" value="ECO:0007669"/>
    <property type="project" value="UniProtKB-KW"/>
</dbReference>
<dbReference type="GO" id="GO:0007059">
    <property type="term" value="P:chromosome segregation"/>
    <property type="evidence" value="ECO:0007669"/>
    <property type="project" value="UniProtKB-UniRule"/>
</dbReference>
<dbReference type="GO" id="GO:0006313">
    <property type="term" value="P:DNA transposition"/>
    <property type="evidence" value="ECO:0007669"/>
    <property type="project" value="UniProtKB-UniRule"/>
</dbReference>
<dbReference type="Gene3D" id="1.10.150.130">
    <property type="match status" value="1"/>
</dbReference>
<dbReference type="Gene3D" id="1.10.443.10">
    <property type="entry name" value="Intergrase catalytic core"/>
    <property type="match status" value="1"/>
</dbReference>
<dbReference type="HAMAP" id="MF_01808">
    <property type="entry name" value="Recomb_XerC_XerD"/>
    <property type="match status" value="1"/>
</dbReference>
<dbReference type="HAMAP" id="MF_01807">
    <property type="entry name" value="Recomb_XerD"/>
    <property type="match status" value="1"/>
</dbReference>
<dbReference type="InterPro" id="IPR044068">
    <property type="entry name" value="CB"/>
</dbReference>
<dbReference type="InterPro" id="IPR011010">
    <property type="entry name" value="DNA_brk_join_enz"/>
</dbReference>
<dbReference type="InterPro" id="IPR013762">
    <property type="entry name" value="Integrase-like_cat_sf"/>
</dbReference>
<dbReference type="InterPro" id="IPR002104">
    <property type="entry name" value="Integrase_catalytic"/>
</dbReference>
<dbReference type="InterPro" id="IPR010998">
    <property type="entry name" value="Integrase_recombinase_N"/>
</dbReference>
<dbReference type="InterPro" id="IPR004107">
    <property type="entry name" value="Integrase_SAM-like_N"/>
</dbReference>
<dbReference type="InterPro" id="IPR011932">
    <property type="entry name" value="Recomb_XerD"/>
</dbReference>
<dbReference type="InterPro" id="IPR023009">
    <property type="entry name" value="Tyrosine_recombinase_XerC/XerD"/>
</dbReference>
<dbReference type="InterPro" id="IPR050090">
    <property type="entry name" value="Tyrosine_recombinase_XerCD"/>
</dbReference>
<dbReference type="NCBIfam" id="NF001399">
    <property type="entry name" value="PRK00283.1"/>
    <property type="match status" value="1"/>
</dbReference>
<dbReference type="NCBIfam" id="TIGR02225">
    <property type="entry name" value="recomb_XerD"/>
    <property type="match status" value="1"/>
</dbReference>
<dbReference type="PANTHER" id="PTHR30349">
    <property type="entry name" value="PHAGE INTEGRASE-RELATED"/>
    <property type="match status" value="1"/>
</dbReference>
<dbReference type="PANTHER" id="PTHR30349:SF90">
    <property type="entry name" value="TYROSINE RECOMBINASE XERD"/>
    <property type="match status" value="1"/>
</dbReference>
<dbReference type="Pfam" id="PF02899">
    <property type="entry name" value="Phage_int_SAM_1"/>
    <property type="match status" value="1"/>
</dbReference>
<dbReference type="Pfam" id="PF00589">
    <property type="entry name" value="Phage_integrase"/>
    <property type="match status" value="1"/>
</dbReference>
<dbReference type="SUPFAM" id="SSF56349">
    <property type="entry name" value="DNA breaking-rejoining enzymes"/>
    <property type="match status" value="1"/>
</dbReference>
<dbReference type="PROSITE" id="PS51900">
    <property type="entry name" value="CB"/>
    <property type="match status" value="1"/>
</dbReference>
<dbReference type="PROSITE" id="PS51898">
    <property type="entry name" value="TYR_RECOMBINASE"/>
    <property type="match status" value="1"/>
</dbReference>
<keyword id="KW-0131">Cell cycle</keyword>
<keyword id="KW-0132">Cell division</keyword>
<keyword id="KW-0159">Chromosome partition</keyword>
<keyword id="KW-0963">Cytoplasm</keyword>
<keyword id="KW-0229">DNA integration</keyword>
<keyword id="KW-0233">DNA recombination</keyword>
<keyword id="KW-0238">DNA-binding</keyword>
<keyword id="KW-1185">Reference proteome</keyword>
<gene>
    <name type="primary">xerD</name>
    <name type="ordered locus">BAB1_2032</name>
</gene>
<protein>
    <recommendedName>
        <fullName>Tyrosine recombinase XerD</fullName>
    </recommendedName>
</protein>
<sequence>MTMRASLAIENFLEMMSAERGAAQNTLESYRRDLEAAAEELAAKGVNLAEAETGHIRMTLDTMAAQGFAPTSQARRLSALRQFFRFLYSEGFRQDDPTGILYAPKKQKPLPKIMSVENVGKLLDRAALEANEAAEPGERIKALRLHALLETLYATGLRVSELVGLPVTVARTDHRFLLVRGKGSKDRMVPLSRKARDALQKFLTLRDSLPGSDDNPWLFPAFSESGHLARQVFARELKGLAARAGLAASSASPHVLRHAFASHLLQNGADLRTVQQLLGHADISTTQIYTHVLEERLHKLVSEHHPLAD</sequence>
<name>XERD_BRUA2</name>
<accession>Q2YR40</accession>
<accession>Q57AM6</accession>
<accession>Q9FDG0</accession>
<organism>
    <name type="scientific">Brucella abortus (strain 2308)</name>
    <dbReference type="NCBI Taxonomy" id="359391"/>
    <lineage>
        <taxon>Bacteria</taxon>
        <taxon>Pseudomonadati</taxon>
        <taxon>Pseudomonadota</taxon>
        <taxon>Alphaproteobacteria</taxon>
        <taxon>Hyphomicrobiales</taxon>
        <taxon>Brucellaceae</taxon>
        <taxon>Brucella/Ochrobactrum group</taxon>
        <taxon>Brucella</taxon>
    </lineage>
</organism>
<comment type="function">
    <text evidence="1">Site-specific tyrosine recombinase, which acts by catalyzing the cutting and rejoining of the recombining DNA molecules. The XerC-XerD complex is essential to convert dimers of the bacterial chromosome into monomers to permit their segregation at cell division. It also contributes to the segregational stability of plasmids (By similarity).</text>
</comment>
<comment type="subunit">
    <text evidence="1">Forms a cyclic heterotetrameric complex composed of two molecules of XerC and two molecules of XerD.</text>
</comment>
<comment type="subcellular location">
    <subcellularLocation>
        <location evidence="1">Cytoplasm</location>
    </subcellularLocation>
</comment>
<comment type="induction">
    <text evidence="4">It is induced 4 hours after macrophage infection.</text>
</comment>
<comment type="similarity">
    <text evidence="5">Belongs to the 'phage' integrase family. XerD subfamily.</text>
</comment>
<comment type="sequence caution" evidence="5">
    <conflict type="erroneous initiation">
        <sequence resource="EMBL-CDS" id="CAJ11988"/>
    </conflict>
</comment>
<reference key="1">
    <citation type="journal article" date="2005" name="Infect. Immun.">
        <title>Whole-genome analyses of speciation events in pathogenic Brucellae.</title>
        <authorList>
            <person name="Chain P.S."/>
            <person name="Comerci D.J."/>
            <person name="Tolmasky M.E."/>
            <person name="Larimer F.W."/>
            <person name="Malfatti S.A."/>
            <person name="Vergez L.M."/>
            <person name="Aguero F."/>
            <person name="Land M.L."/>
            <person name="Ugalde R.A."/>
            <person name="Garcia E."/>
        </authorList>
    </citation>
    <scope>NUCLEOTIDE SEQUENCE [LARGE SCALE GENOMIC DNA]</scope>
    <source>
        <strain>2308</strain>
    </source>
</reference>
<reference key="2">
    <citation type="journal article" date="2001" name="Infect. Immun.">
        <title>Brucella abortus genes identified following constitutive growth and macrophage infection.</title>
        <authorList>
            <person name="Eskra L."/>
            <person name="Canavessi A."/>
            <person name="Carey M."/>
            <person name="Splitter G.A."/>
        </authorList>
    </citation>
    <scope>NUCLEOTIDE SEQUENCE [GENOMIC DNA] OF 1-95</scope>
    <scope>INDUCTION</scope>
</reference>
<feature type="chain" id="PRO_0000095375" description="Tyrosine recombinase XerD">
    <location>
        <begin position="1"/>
        <end position="309"/>
    </location>
</feature>
<feature type="domain" description="Core-binding (CB)" evidence="3">
    <location>
        <begin position="3"/>
        <end position="88"/>
    </location>
</feature>
<feature type="domain" description="Tyr recombinase" evidence="2">
    <location>
        <begin position="109"/>
        <end position="302"/>
    </location>
</feature>
<feature type="active site" evidence="2">
    <location>
        <position position="158"/>
    </location>
</feature>
<feature type="active site" evidence="2">
    <location>
        <position position="182"/>
    </location>
</feature>
<feature type="active site" evidence="2">
    <location>
        <position position="254"/>
    </location>
</feature>
<feature type="active site" evidence="2">
    <location>
        <position position="257"/>
    </location>
</feature>
<feature type="active site" evidence="2">
    <location>
        <position position="280"/>
    </location>
</feature>
<feature type="active site" description="O-(3'-phospho-DNA)-tyrosine intermediate" evidence="2">
    <location>
        <position position="289"/>
    </location>
</feature>
<evidence type="ECO:0000250" key="1"/>
<evidence type="ECO:0000255" key="2">
    <source>
        <dbReference type="PROSITE-ProRule" id="PRU01246"/>
    </source>
</evidence>
<evidence type="ECO:0000255" key="3">
    <source>
        <dbReference type="PROSITE-ProRule" id="PRU01248"/>
    </source>
</evidence>
<evidence type="ECO:0000269" key="4">
    <source>
    </source>
</evidence>
<evidence type="ECO:0000305" key="5"/>
<proteinExistence type="evidence at transcript level"/>